<accession>Q38WH3</accession>
<keyword id="KW-0456">Lyase</keyword>
<keyword id="KW-1185">Reference proteome</keyword>
<reference key="1">
    <citation type="journal article" date="2005" name="Nat. Biotechnol.">
        <title>The complete genome sequence of the meat-borne lactic acid bacterium Lactobacillus sakei 23K.</title>
        <authorList>
            <person name="Chaillou S."/>
            <person name="Champomier-Verges M.-C."/>
            <person name="Cornet M."/>
            <person name="Crutz-Le Coq A.-M."/>
            <person name="Dudez A.-M."/>
            <person name="Martin V."/>
            <person name="Beaufils S."/>
            <person name="Darbon-Rongere E."/>
            <person name="Bossy R."/>
            <person name="Loux V."/>
            <person name="Zagorec M."/>
        </authorList>
    </citation>
    <scope>NUCLEOTIDE SEQUENCE [LARGE SCALE GENOMIC DNA]</scope>
    <source>
        <strain>23K</strain>
    </source>
</reference>
<dbReference type="EC" id="4.2.3.3" evidence="1"/>
<dbReference type="EMBL" id="CR936503">
    <property type="protein sequence ID" value="CAI55459.1"/>
    <property type="molecule type" value="Genomic_DNA"/>
</dbReference>
<dbReference type="RefSeq" id="WP_011374855.1">
    <property type="nucleotide sequence ID" value="NC_007576.1"/>
</dbReference>
<dbReference type="SMR" id="Q38WH3"/>
<dbReference type="STRING" id="314315.LCA_1157"/>
<dbReference type="GeneID" id="57132079"/>
<dbReference type="KEGG" id="lsa:LCA_1157"/>
<dbReference type="eggNOG" id="COG1803">
    <property type="taxonomic scope" value="Bacteria"/>
</dbReference>
<dbReference type="HOGENOM" id="CLU_120420_1_0_9"/>
<dbReference type="OrthoDB" id="9787147at2"/>
<dbReference type="Proteomes" id="UP000002707">
    <property type="component" value="Chromosome"/>
</dbReference>
<dbReference type="GO" id="GO:0005829">
    <property type="term" value="C:cytosol"/>
    <property type="evidence" value="ECO:0007669"/>
    <property type="project" value="TreeGrafter"/>
</dbReference>
<dbReference type="GO" id="GO:0008929">
    <property type="term" value="F:methylglyoxal synthase activity"/>
    <property type="evidence" value="ECO:0007669"/>
    <property type="project" value="UniProtKB-UniRule"/>
</dbReference>
<dbReference type="GO" id="GO:0019242">
    <property type="term" value="P:methylglyoxal biosynthetic process"/>
    <property type="evidence" value="ECO:0007669"/>
    <property type="project" value="UniProtKB-UniRule"/>
</dbReference>
<dbReference type="CDD" id="cd01422">
    <property type="entry name" value="MGS"/>
    <property type="match status" value="1"/>
</dbReference>
<dbReference type="FunFam" id="3.40.50.1380:FF:000006">
    <property type="entry name" value="Methylglyoxal synthase"/>
    <property type="match status" value="1"/>
</dbReference>
<dbReference type="Gene3D" id="3.40.50.1380">
    <property type="entry name" value="Methylglyoxal synthase-like domain"/>
    <property type="match status" value="1"/>
</dbReference>
<dbReference type="HAMAP" id="MF_00549">
    <property type="entry name" value="Methylglyoxal_synth"/>
    <property type="match status" value="1"/>
</dbReference>
<dbReference type="InterPro" id="IPR004363">
    <property type="entry name" value="Methylgl_synth"/>
</dbReference>
<dbReference type="InterPro" id="IPR018148">
    <property type="entry name" value="Methylglyoxal_synth_AS"/>
</dbReference>
<dbReference type="InterPro" id="IPR011607">
    <property type="entry name" value="MGS-like_dom"/>
</dbReference>
<dbReference type="InterPro" id="IPR036914">
    <property type="entry name" value="MGS-like_dom_sf"/>
</dbReference>
<dbReference type="NCBIfam" id="TIGR00160">
    <property type="entry name" value="MGSA"/>
    <property type="match status" value="1"/>
</dbReference>
<dbReference type="NCBIfam" id="NF003559">
    <property type="entry name" value="PRK05234.1"/>
    <property type="match status" value="1"/>
</dbReference>
<dbReference type="PANTHER" id="PTHR30492">
    <property type="entry name" value="METHYLGLYOXAL SYNTHASE"/>
    <property type="match status" value="1"/>
</dbReference>
<dbReference type="PANTHER" id="PTHR30492:SF0">
    <property type="entry name" value="METHYLGLYOXAL SYNTHASE"/>
    <property type="match status" value="1"/>
</dbReference>
<dbReference type="Pfam" id="PF02142">
    <property type="entry name" value="MGS"/>
    <property type="match status" value="1"/>
</dbReference>
<dbReference type="PIRSF" id="PIRSF006614">
    <property type="entry name" value="Methylglyox_syn"/>
    <property type="match status" value="1"/>
</dbReference>
<dbReference type="SMART" id="SM00851">
    <property type="entry name" value="MGS"/>
    <property type="match status" value="1"/>
</dbReference>
<dbReference type="SUPFAM" id="SSF52335">
    <property type="entry name" value="Methylglyoxal synthase-like"/>
    <property type="match status" value="1"/>
</dbReference>
<dbReference type="PROSITE" id="PS01335">
    <property type="entry name" value="METHYLGLYOXAL_SYNTH"/>
    <property type="match status" value="1"/>
</dbReference>
<dbReference type="PROSITE" id="PS51855">
    <property type="entry name" value="MGS"/>
    <property type="match status" value="1"/>
</dbReference>
<feature type="chain" id="PRO_1000017815" description="Methylglyoxal synthase">
    <location>
        <begin position="1"/>
        <end position="140"/>
    </location>
</feature>
<feature type="domain" description="MGS-like" evidence="1">
    <location>
        <begin position="1"/>
        <end position="140"/>
    </location>
</feature>
<feature type="active site" description="Proton donor/acceptor" evidence="1">
    <location>
        <position position="60"/>
    </location>
</feature>
<feature type="binding site" evidence="1">
    <location>
        <position position="8"/>
    </location>
    <ligand>
        <name>substrate</name>
    </ligand>
</feature>
<feature type="binding site" evidence="1">
    <location>
        <position position="12"/>
    </location>
    <ligand>
        <name>substrate</name>
    </ligand>
</feature>
<feature type="binding site" evidence="1">
    <location>
        <begin position="34"/>
        <end position="37"/>
    </location>
    <ligand>
        <name>substrate</name>
    </ligand>
</feature>
<feature type="binding site" evidence="1">
    <location>
        <begin position="54"/>
        <end position="55"/>
    </location>
    <ligand>
        <name>substrate</name>
    </ligand>
</feature>
<feature type="binding site" evidence="1">
    <location>
        <position position="87"/>
    </location>
    <ligand>
        <name>substrate</name>
    </ligand>
</feature>
<protein>
    <recommendedName>
        <fullName evidence="1">Methylglyoxal synthase</fullName>
        <shortName evidence="1">MGS</shortName>
        <ecNumber evidence="1">4.2.3.3</ecNumber>
    </recommendedName>
</protein>
<gene>
    <name evidence="1" type="primary">mgsA</name>
    <name type="ordered locus">LCA_1157</name>
</gene>
<proteinExistence type="inferred from homology"/>
<sequence>MKIALIAHDRQKPLIVKLATAYQPILAQHELFATGTTGQKIIDATGLSVKRFKSGPLGGDQQIGALISENKMDLVIFLRDPLTAQPHEPDVNALIRLSDVYEVPLATNIGTAEVLLRGLDQGLMAFREVVHDQDSNPINL</sequence>
<name>MGSA_LATSS</name>
<comment type="function">
    <text evidence="1">Catalyzes the formation of methylglyoxal from dihydroxyacetone phosphate.</text>
</comment>
<comment type="catalytic activity">
    <reaction evidence="1">
        <text>dihydroxyacetone phosphate = methylglyoxal + phosphate</text>
        <dbReference type="Rhea" id="RHEA:17937"/>
        <dbReference type="ChEBI" id="CHEBI:17158"/>
        <dbReference type="ChEBI" id="CHEBI:43474"/>
        <dbReference type="ChEBI" id="CHEBI:57642"/>
        <dbReference type="EC" id="4.2.3.3"/>
    </reaction>
</comment>
<comment type="similarity">
    <text evidence="1">Belongs to the methylglyoxal synthase family.</text>
</comment>
<evidence type="ECO:0000255" key="1">
    <source>
        <dbReference type="HAMAP-Rule" id="MF_00549"/>
    </source>
</evidence>
<organism>
    <name type="scientific">Latilactobacillus sakei subsp. sakei (strain 23K)</name>
    <name type="common">Lactobacillus sakei subsp. sakei</name>
    <dbReference type="NCBI Taxonomy" id="314315"/>
    <lineage>
        <taxon>Bacteria</taxon>
        <taxon>Bacillati</taxon>
        <taxon>Bacillota</taxon>
        <taxon>Bacilli</taxon>
        <taxon>Lactobacillales</taxon>
        <taxon>Lactobacillaceae</taxon>
        <taxon>Latilactobacillus</taxon>
    </lineage>
</organism>